<comment type="function">
    <text evidence="1">Catalyzes the synthesis of beta-nicotinate D-ribonucleotide from nicotinate and 5-phospho-D-ribose 1-phosphate at the expense of ATP.</text>
</comment>
<comment type="catalytic activity">
    <reaction evidence="1">
        <text>nicotinate + 5-phospho-alpha-D-ribose 1-diphosphate + ATP + H2O = nicotinate beta-D-ribonucleotide + ADP + phosphate + diphosphate</text>
        <dbReference type="Rhea" id="RHEA:36163"/>
        <dbReference type="ChEBI" id="CHEBI:15377"/>
        <dbReference type="ChEBI" id="CHEBI:30616"/>
        <dbReference type="ChEBI" id="CHEBI:32544"/>
        <dbReference type="ChEBI" id="CHEBI:33019"/>
        <dbReference type="ChEBI" id="CHEBI:43474"/>
        <dbReference type="ChEBI" id="CHEBI:57502"/>
        <dbReference type="ChEBI" id="CHEBI:58017"/>
        <dbReference type="ChEBI" id="CHEBI:456216"/>
        <dbReference type="EC" id="6.3.4.21"/>
    </reaction>
</comment>
<comment type="pathway">
    <text evidence="1">Cofactor biosynthesis; NAD(+) biosynthesis; nicotinate D-ribonucleotide from nicotinate: step 1/1.</text>
</comment>
<comment type="PTM">
    <text evidence="1">Transiently phosphorylated on a His residue during the reaction cycle. Phosphorylation strongly increases the affinity for substrates and increases the rate of nicotinate D-ribonucleotide production. Dephosphorylation regenerates the low-affinity form of the enzyme, leading to product release.</text>
</comment>
<comment type="similarity">
    <text evidence="1">Belongs to the NAPRTase family.</text>
</comment>
<proteinExistence type="inferred from homology"/>
<organism>
    <name type="scientific">Vibrio campbellii (strain ATCC BAA-1116)</name>
    <dbReference type="NCBI Taxonomy" id="2902295"/>
    <lineage>
        <taxon>Bacteria</taxon>
        <taxon>Pseudomonadati</taxon>
        <taxon>Pseudomonadota</taxon>
        <taxon>Gammaproteobacteria</taxon>
        <taxon>Vibrionales</taxon>
        <taxon>Vibrionaceae</taxon>
        <taxon>Vibrio</taxon>
    </lineage>
</organism>
<dbReference type="EC" id="6.3.4.21" evidence="1"/>
<dbReference type="EMBL" id="CP000790">
    <property type="protein sequence ID" value="ABU74466.1"/>
    <property type="molecule type" value="Genomic_DNA"/>
</dbReference>
<dbReference type="RefSeq" id="WP_012129991.1">
    <property type="nucleotide sequence ID" value="NC_009784.1"/>
</dbReference>
<dbReference type="SMR" id="A7N4I5"/>
<dbReference type="KEGG" id="vha:VIBHAR_06575"/>
<dbReference type="PATRIC" id="fig|338187.25.peg.3822"/>
<dbReference type="UniPathway" id="UPA00253">
    <property type="reaction ID" value="UER00457"/>
</dbReference>
<dbReference type="Proteomes" id="UP000008152">
    <property type="component" value="Chromosome II"/>
</dbReference>
<dbReference type="GO" id="GO:0005829">
    <property type="term" value="C:cytosol"/>
    <property type="evidence" value="ECO:0007669"/>
    <property type="project" value="TreeGrafter"/>
</dbReference>
<dbReference type="GO" id="GO:0004516">
    <property type="term" value="F:nicotinate phosphoribosyltransferase activity"/>
    <property type="evidence" value="ECO:0007669"/>
    <property type="project" value="UniProtKB-UniRule"/>
</dbReference>
<dbReference type="GO" id="GO:0034355">
    <property type="term" value="P:NAD biosynthetic process via the salvage pathway"/>
    <property type="evidence" value="ECO:0007669"/>
    <property type="project" value="TreeGrafter"/>
</dbReference>
<dbReference type="CDD" id="cd01401">
    <property type="entry name" value="PncB_like"/>
    <property type="match status" value="1"/>
</dbReference>
<dbReference type="Gene3D" id="3.20.140.10">
    <property type="entry name" value="nicotinate phosphoribosyltransferase"/>
    <property type="match status" value="1"/>
</dbReference>
<dbReference type="HAMAP" id="MF_00570">
    <property type="entry name" value="NAPRTase"/>
    <property type="match status" value="1"/>
</dbReference>
<dbReference type="InterPro" id="IPR041525">
    <property type="entry name" value="N/Namide_PRibTrfase"/>
</dbReference>
<dbReference type="InterPro" id="IPR040727">
    <property type="entry name" value="NAPRTase_N"/>
</dbReference>
<dbReference type="InterPro" id="IPR006406">
    <property type="entry name" value="Nic_PRibTrfase"/>
</dbReference>
<dbReference type="InterPro" id="IPR007229">
    <property type="entry name" value="Nic_PRibTrfase-Fam"/>
</dbReference>
<dbReference type="InterPro" id="IPR036068">
    <property type="entry name" value="Nicotinate_pribotase-like_C"/>
</dbReference>
<dbReference type="NCBIfam" id="TIGR01514">
    <property type="entry name" value="NAPRTase"/>
    <property type="match status" value="1"/>
</dbReference>
<dbReference type="NCBIfam" id="NF003704">
    <property type="entry name" value="PRK05321.1"/>
    <property type="match status" value="1"/>
</dbReference>
<dbReference type="PANTHER" id="PTHR11098">
    <property type="entry name" value="NICOTINATE PHOSPHORIBOSYLTRANSFERASE"/>
    <property type="match status" value="1"/>
</dbReference>
<dbReference type="PANTHER" id="PTHR11098:SF1">
    <property type="entry name" value="NICOTINATE PHOSPHORIBOSYLTRANSFERASE"/>
    <property type="match status" value="1"/>
</dbReference>
<dbReference type="Pfam" id="PF04095">
    <property type="entry name" value="NAPRTase"/>
    <property type="match status" value="1"/>
</dbReference>
<dbReference type="Pfam" id="PF17767">
    <property type="entry name" value="NAPRTase_N"/>
    <property type="match status" value="1"/>
</dbReference>
<dbReference type="PIRSF" id="PIRSF000484">
    <property type="entry name" value="NAPRT"/>
    <property type="match status" value="1"/>
</dbReference>
<dbReference type="SUPFAM" id="SSF51690">
    <property type="entry name" value="Nicotinate/Quinolinate PRTase C-terminal domain-like"/>
    <property type="match status" value="1"/>
</dbReference>
<dbReference type="SUPFAM" id="SSF54675">
    <property type="entry name" value="Nicotinate/Quinolinate PRTase N-terminal domain-like"/>
    <property type="match status" value="1"/>
</dbReference>
<feature type="chain" id="PRO_1000025017" description="Nicotinate phosphoribosyltransferase">
    <location>
        <begin position="1"/>
        <end position="436"/>
    </location>
</feature>
<feature type="modified residue" description="Phosphohistidine; by autocatalysis" evidence="1">
    <location>
        <position position="231"/>
    </location>
</feature>
<reference key="1">
    <citation type="submission" date="2007-08" db="EMBL/GenBank/DDBJ databases">
        <authorList>
            <consortium name="The Vibrio harveyi Genome Sequencing Project"/>
            <person name="Bassler B."/>
            <person name="Clifton S.W."/>
            <person name="Fulton L."/>
            <person name="Delehaunty K."/>
            <person name="Fronick C."/>
            <person name="Harrison M."/>
            <person name="Markivic C."/>
            <person name="Fulton R."/>
            <person name="Tin-Wollam A.-M."/>
            <person name="Shah N."/>
            <person name="Pepin K."/>
            <person name="Nash W."/>
            <person name="Thiruvilangam P."/>
            <person name="Bhonagiri V."/>
            <person name="Waters C."/>
            <person name="Tu K.C."/>
            <person name="Irgon J."/>
            <person name="Wilson R.K."/>
        </authorList>
    </citation>
    <scope>NUCLEOTIDE SEQUENCE [LARGE SCALE GENOMIC DNA]</scope>
    <source>
        <strain>ATCC BAA-1116 / BB120</strain>
    </source>
</reference>
<accession>A7N4I5</accession>
<evidence type="ECO:0000255" key="1">
    <source>
        <dbReference type="HAMAP-Rule" id="MF_00570"/>
    </source>
</evidence>
<gene>
    <name evidence="1" type="primary">pncB</name>
    <name type="ordered locus">VIBHAR_06575</name>
</gene>
<sequence>MTTNLFSSRIIQSALDFDVYKVNMMSAVAALYPDAMVSYKFIVRSEEDLSELLPEVKAEVLKLQDITFSTEEIEYIKGVAPYLNPEFVDALHAFRFNPQRDVSFNIKTMADGTSQLRITINGLWKETILYETIIMSIVSEVRSRARWAEVPVEQFQSVLEEKVRHLKTELKRRNITNFKFADMSTRRRFSFQAQRSMLKYLSKELPDCLTGTSNYHLAKELGLTPIGTVAHEWFMGHQALVNVRDSQKVALQRWQKMFNGALGIALTDTIGIDAFLKDFDEELSNAYVGVRHDSGCPYTWGEKMIEHYQSLGIDPMTKTLVFTDGLNFEQALAICEHFQDRVQVSFGIGTSLANDMGDYANAQGIAYKPLSIVIKMVSCNGSPVAKISDEPEKAMCEDIFFLMNLKRRFEQPLDLDECRGLIDRLEDEGDNYLIDA</sequence>
<name>PNCB_VIBC1</name>
<protein>
    <recommendedName>
        <fullName evidence="1">Nicotinate phosphoribosyltransferase</fullName>
        <shortName evidence="1">NAPRTase</shortName>
        <ecNumber evidence="1">6.3.4.21</ecNumber>
    </recommendedName>
</protein>
<keyword id="KW-0436">Ligase</keyword>
<keyword id="KW-0597">Phosphoprotein</keyword>
<keyword id="KW-0662">Pyridine nucleotide biosynthesis</keyword>